<evidence type="ECO:0000255" key="1">
    <source>
        <dbReference type="HAMAP-Rule" id="MF_00791"/>
    </source>
</evidence>
<reference key="1">
    <citation type="journal article" date="2007" name="Science">
        <title>Legumes symbioses: absence of nod genes in photosynthetic bradyrhizobia.</title>
        <authorList>
            <person name="Giraud E."/>
            <person name="Moulin L."/>
            <person name="Vallenet D."/>
            <person name="Barbe V."/>
            <person name="Cytryn E."/>
            <person name="Avarre J.-C."/>
            <person name="Jaubert M."/>
            <person name="Simon D."/>
            <person name="Cartieaux F."/>
            <person name="Prin Y."/>
            <person name="Bena G."/>
            <person name="Hannibal L."/>
            <person name="Fardoux J."/>
            <person name="Kojadinovic M."/>
            <person name="Vuillet L."/>
            <person name="Lajus A."/>
            <person name="Cruveiller S."/>
            <person name="Rouy Z."/>
            <person name="Mangenot S."/>
            <person name="Segurens B."/>
            <person name="Dossat C."/>
            <person name="Franck W.L."/>
            <person name="Chang W.-S."/>
            <person name="Saunders E."/>
            <person name="Bruce D."/>
            <person name="Richardson P."/>
            <person name="Normand P."/>
            <person name="Dreyfus B."/>
            <person name="Pignol D."/>
            <person name="Stacey G."/>
            <person name="Emerich D."/>
            <person name="Vermeglio A."/>
            <person name="Medigue C."/>
            <person name="Sadowsky M."/>
        </authorList>
    </citation>
    <scope>NUCLEOTIDE SEQUENCE [LARGE SCALE GENOMIC DNA]</scope>
    <source>
        <strain>BTAi1 / ATCC BAA-1182</strain>
    </source>
</reference>
<keyword id="KW-1185">Reference proteome</keyword>
<feature type="chain" id="PRO_1000083607" description="Protein ApaG">
    <location>
        <begin position="1"/>
        <end position="131"/>
    </location>
</feature>
<feature type="domain" description="ApaG" evidence="1">
    <location>
        <begin position="3"/>
        <end position="127"/>
    </location>
</feature>
<gene>
    <name evidence="1" type="primary">apaG</name>
    <name type="ordered locus">BBta_0764</name>
</gene>
<proteinExistence type="inferred from homology"/>
<name>APAG_BRASB</name>
<accession>A5EA34</accession>
<organism>
    <name type="scientific">Bradyrhizobium sp. (strain BTAi1 / ATCC BAA-1182)</name>
    <dbReference type="NCBI Taxonomy" id="288000"/>
    <lineage>
        <taxon>Bacteria</taxon>
        <taxon>Pseudomonadati</taxon>
        <taxon>Pseudomonadota</taxon>
        <taxon>Alphaproteobacteria</taxon>
        <taxon>Hyphomicrobiales</taxon>
        <taxon>Nitrobacteraceae</taxon>
        <taxon>Bradyrhizobium</taxon>
    </lineage>
</organism>
<protein>
    <recommendedName>
        <fullName evidence="1">Protein ApaG</fullName>
    </recommendedName>
</protein>
<dbReference type="EMBL" id="CP000494">
    <property type="protein sequence ID" value="ABQ33028.1"/>
    <property type="molecule type" value="Genomic_DNA"/>
</dbReference>
<dbReference type="RefSeq" id="WP_012041079.1">
    <property type="nucleotide sequence ID" value="NC_009485.1"/>
</dbReference>
<dbReference type="SMR" id="A5EA34"/>
<dbReference type="STRING" id="288000.BBta_0764"/>
<dbReference type="KEGG" id="bbt:BBta_0764"/>
<dbReference type="eggNOG" id="COG2967">
    <property type="taxonomic scope" value="Bacteria"/>
</dbReference>
<dbReference type="HOGENOM" id="CLU_128074_1_0_5"/>
<dbReference type="OrthoDB" id="9795226at2"/>
<dbReference type="Proteomes" id="UP000000246">
    <property type="component" value="Chromosome"/>
</dbReference>
<dbReference type="GO" id="GO:0070987">
    <property type="term" value="P:error-free translesion synthesis"/>
    <property type="evidence" value="ECO:0007669"/>
    <property type="project" value="TreeGrafter"/>
</dbReference>
<dbReference type="Gene3D" id="2.60.40.1470">
    <property type="entry name" value="ApaG domain"/>
    <property type="match status" value="1"/>
</dbReference>
<dbReference type="HAMAP" id="MF_00791">
    <property type="entry name" value="ApaG"/>
    <property type="match status" value="1"/>
</dbReference>
<dbReference type="InterPro" id="IPR007474">
    <property type="entry name" value="ApaG_domain"/>
</dbReference>
<dbReference type="InterPro" id="IPR036767">
    <property type="entry name" value="ApaG_sf"/>
</dbReference>
<dbReference type="InterPro" id="IPR023065">
    <property type="entry name" value="Uncharacterised_ApaG"/>
</dbReference>
<dbReference type="NCBIfam" id="NF003967">
    <property type="entry name" value="PRK05461.1"/>
    <property type="match status" value="1"/>
</dbReference>
<dbReference type="PANTHER" id="PTHR14289">
    <property type="entry name" value="F-BOX ONLY PROTEIN 3"/>
    <property type="match status" value="1"/>
</dbReference>
<dbReference type="PANTHER" id="PTHR14289:SF16">
    <property type="entry name" value="POLYMERASE DELTA-INTERACTING PROTEIN 2"/>
    <property type="match status" value="1"/>
</dbReference>
<dbReference type="Pfam" id="PF04379">
    <property type="entry name" value="DUF525"/>
    <property type="match status" value="1"/>
</dbReference>
<dbReference type="SUPFAM" id="SSF110069">
    <property type="entry name" value="ApaG-like"/>
    <property type="match status" value="1"/>
</dbReference>
<dbReference type="PROSITE" id="PS51087">
    <property type="entry name" value="APAG"/>
    <property type="match status" value="1"/>
</dbReference>
<sequence>MYRAVTRQIEVTVEPNFLPEKSSVADGRWFWSYTVVITNTGEDTVKLRSRHWIITDGVGRQQEVRGEGVVGEQPVLAPGERFEYTSGVPLTTASGFMAGSYQMESASGEQFDIAVPAFSLDSPDGGKRVLN</sequence>